<comment type="function">
    <text evidence="1">Condensation of UDP-2,3-diacylglucosamine and 2,3-diacylglucosamine-1-phosphate to form lipid A disaccharide, a precursor of lipid A, a phosphorylated glycolipid that anchors the lipopolysaccharide to the outer membrane of the cell.</text>
</comment>
<comment type="catalytic activity">
    <reaction evidence="1">
        <text>a lipid X + a UDP-2-N,3-O-bis[(3R)-3-hydroxyacyl]-alpha-D-glucosamine = a lipid A disaccharide + UDP + H(+)</text>
        <dbReference type="Rhea" id="RHEA:67828"/>
        <dbReference type="ChEBI" id="CHEBI:15378"/>
        <dbReference type="ChEBI" id="CHEBI:58223"/>
        <dbReference type="ChEBI" id="CHEBI:137748"/>
        <dbReference type="ChEBI" id="CHEBI:176338"/>
        <dbReference type="ChEBI" id="CHEBI:176343"/>
        <dbReference type="EC" id="2.4.1.182"/>
    </reaction>
</comment>
<comment type="pathway">
    <text evidence="1">Bacterial outer membrane biogenesis; LPS lipid A biosynthesis.</text>
</comment>
<comment type="similarity">
    <text evidence="1">Belongs to the LpxB family.</text>
</comment>
<organism>
    <name type="scientific">Vibrio parahaemolyticus serotype O3:K6 (strain RIMD 2210633)</name>
    <dbReference type="NCBI Taxonomy" id="223926"/>
    <lineage>
        <taxon>Bacteria</taxon>
        <taxon>Pseudomonadati</taxon>
        <taxon>Pseudomonadota</taxon>
        <taxon>Gammaproteobacteria</taxon>
        <taxon>Vibrionales</taxon>
        <taxon>Vibrionaceae</taxon>
        <taxon>Vibrio</taxon>
    </lineage>
</organism>
<dbReference type="EC" id="2.4.1.182" evidence="1"/>
<dbReference type="EMBL" id="BA000031">
    <property type="protein sequence ID" value="BAC60568.1"/>
    <property type="molecule type" value="Genomic_DNA"/>
</dbReference>
<dbReference type="RefSeq" id="NP_798684.1">
    <property type="nucleotide sequence ID" value="NC_004603.1"/>
</dbReference>
<dbReference type="RefSeq" id="WP_005480975.1">
    <property type="nucleotide sequence ID" value="NC_004603.1"/>
</dbReference>
<dbReference type="SMR" id="Q87MF0"/>
<dbReference type="CAZy" id="GT19">
    <property type="family name" value="Glycosyltransferase Family 19"/>
</dbReference>
<dbReference type="GeneID" id="65555220"/>
<dbReference type="KEGG" id="vpa:VP2305"/>
<dbReference type="PATRIC" id="fig|223926.6.peg.2207"/>
<dbReference type="eggNOG" id="COG0763">
    <property type="taxonomic scope" value="Bacteria"/>
</dbReference>
<dbReference type="HOGENOM" id="CLU_036577_3_0_6"/>
<dbReference type="UniPathway" id="UPA00973"/>
<dbReference type="Proteomes" id="UP000002493">
    <property type="component" value="Chromosome 1"/>
</dbReference>
<dbReference type="GO" id="GO:0016020">
    <property type="term" value="C:membrane"/>
    <property type="evidence" value="ECO:0007669"/>
    <property type="project" value="GOC"/>
</dbReference>
<dbReference type="GO" id="GO:0008915">
    <property type="term" value="F:lipid-A-disaccharide synthase activity"/>
    <property type="evidence" value="ECO:0007669"/>
    <property type="project" value="UniProtKB-UniRule"/>
</dbReference>
<dbReference type="GO" id="GO:0005543">
    <property type="term" value="F:phospholipid binding"/>
    <property type="evidence" value="ECO:0007669"/>
    <property type="project" value="TreeGrafter"/>
</dbReference>
<dbReference type="GO" id="GO:0009245">
    <property type="term" value="P:lipid A biosynthetic process"/>
    <property type="evidence" value="ECO:0007669"/>
    <property type="project" value="UniProtKB-UniRule"/>
</dbReference>
<dbReference type="HAMAP" id="MF_00392">
    <property type="entry name" value="LpxB"/>
    <property type="match status" value="1"/>
</dbReference>
<dbReference type="InterPro" id="IPR003835">
    <property type="entry name" value="Glyco_trans_19"/>
</dbReference>
<dbReference type="NCBIfam" id="TIGR00215">
    <property type="entry name" value="lpxB"/>
    <property type="match status" value="1"/>
</dbReference>
<dbReference type="PANTHER" id="PTHR30372">
    <property type="entry name" value="LIPID-A-DISACCHARIDE SYNTHASE"/>
    <property type="match status" value="1"/>
</dbReference>
<dbReference type="PANTHER" id="PTHR30372:SF4">
    <property type="entry name" value="LIPID-A-DISACCHARIDE SYNTHASE, MITOCHONDRIAL-RELATED"/>
    <property type="match status" value="1"/>
</dbReference>
<dbReference type="Pfam" id="PF02684">
    <property type="entry name" value="LpxB"/>
    <property type="match status" value="1"/>
</dbReference>
<dbReference type="SUPFAM" id="SSF53756">
    <property type="entry name" value="UDP-Glycosyltransferase/glycogen phosphorylase"/>
    <property type="match status" value="1"/>
</dbReference>
<feature type="chain" id="PRO_0000190189" description="Lipid-A-disaccharide synthase">
    <location>
        <begin position="1"/>
        <end position="379"/>
    </location>
</feature>
<sequence length="379" mass="42764">MEKPLRIGIIAGELSGDTLGEGFIKAVKERYPNAEFVGIGGPKMIAQGCESLFDMEELAVMGLVEVLGRLPRLLKVKAELVKYFTQNPPDVFVGIDAPDFNLRLELDLKQAGIKTVHYVSPSVWAWRQKRIFKIEAATNLVLAFLPFEKAFYDKFNVPCEFIGHTLADAIPLQSEQAPARDLLGLEQDKKWLAVLPGSRGSELKMLSQPFIETCKLLHQKYPGLGFVVALVNQKRREQFEQAWKEHAPELDFKLVDDTARNVITASDAVMLASGTVALECMLLKRPMVVGYRVNTFTAFLAKRLLKTKYVSLPNILADDELVKEYLQDDCTPDNLFNEVSRLLESDNKPMLDKFTEMHHWIRKDADQQAANAVLKLIEK</sequence>
<proteinExistence type="inferred from homology"/>
<evidence type="ECO:0000255" key="1">
    <source>
        <dbReference type="HAMAP-Rule" id="MF_00392"/>
    </source>
</evidence>
<name>LPXB_VIBPA</name>
<reference key="1">
    <citation type="journal article" date="2003" name="Lancet">
        <title>Genome sequence of Vibrio parahaemolyticus: a pathogenic mechanism distinct from that of V. cholerae.</title>
        <authorList>
            <person name="Makino K."/>
            <person name="Oshima K."/>
            <person name="Kurokawa K."/>
            <person name="Yokoyama K."/>
            <person name="Uda T."/>
            <person name="Tagomori K."/>
            <person name="Iijima Y."/>
            <person name="Najima M."/>
            <person name="Nakano M."/>
            <person name="Yamashita A."/>
            <person name="Kubota Y."/>
            <person name="Kimura S."/>
            <person name="Yasunaga T."/>
            <person name="Honda T."/>
            <person name="Shinagawa H."/>
            <person name="Hattori M."/>
            <person name="Iida T."/>
        </authorList>
    </citation>
    <scope>NUCLEOTIDE SEQUENCE [LARGE SCALE GENOMIC DNA]</scope>
    <source>
        <strain>RIMD 2210633</strain>
    </source>
</reference>
<gene>
    <name evidence="1" type="primary">lpxB</name>
    <name type="ordered locus">VP2305</name>
</gene>
<protein>
    <recommendedName>
        <fullName evidence="1">Lipid-A-disaccharide synthase</fullName>
        <ecNumber evidence="1">2.4.1.182</ecNumber>
    </recommendedName>
</protein>
<accession>Q87MF0</accession>
<keyword id="KW-0328">Glycosyltransferase</keyword>
<keyword id="KW-0441">Lipid A biosynthesis</keyword>
<keyword id="KW-0444">Lipid biosynthesis</keyword>
<keyword id="KW-0443">Lipid metabolism</keyword>
<keyword id="KW-0808">Transferase</keyword>